<comment type="function">
    <text evidence="3">Catalyzes a late step in pyrimidine degradation. Converts N-carbamoyl-beta-alanine (3-ureidopropanoate) into beta-alanine, ammonia and carbon dioxide. Likewise, converts N-carbamoyl-beta-aminoisobutyrate (3-ureidoisobutyrate) into beta-aminoisobutyrate, ammonia and carbon dioxide.</text>
</comment>
<comment type="catalytic activity">
    <reaction evidence="3">
        <text>3-(carbamoylamino)propanoate + H2O + 2 H(+) = beta-alanine + NH4(+) + CO2</text>
        <dbReference type="Rhea" id="RHEA:11184"/>
        <dbReference type="ChEBI" id="CHEBI:11892"/>
        <dbReference type="ChEBI" id="CHEBI:15377"/>
        <dbReference type="ChEBI" id="CHEBI:15378"/>
        <dbReference type="ChEBI" id="CHEBI:16526"/>
        <dbReference type="ChEBI" id="CHEBI:28938"/>
        <dbReference type="ChEBI" id="CHEBI:57966"/>
        <dbReference type="EC" id="3.5.1.6"/>
    </reaction>
</comment>
<comment type="catalytic activity">
    <reaction evidence="3">
        <text>3-(carbamoylamino)-2-methylpropanoate + H2O + 2 H(+) = (R)-3-amino-2-methylpropanoate + NH4(+) + CO2</text>
        <dbReference type="Rhea" id="RHEA:37339"/>
        <dbReference type="ChEBI" id="CHEBI:15377"/>
        <dbReference type="ChEBI" id="CHEBI:15378"/>
        <dbReference type="ChEBI" id="CHEBI:16526"/>
        <dbReference type="ChEBI" id="CHEBI:28938"/>
        <dbReference type="ChEBI" id="CHEBI:57731"/>
        <dbReference type="ChEBI" id="CHEBI:74414"/>
        <dbReference type="EC" id="3.5.1.6"/>
    </reaction>
</comment>
<comment type="pathway">
    <text evidence="3">Amino-acid biosynthesis; beta-alanine biosynthesis.</text>
</comment>
<comment type="subunit">
    <text evidence="3">Homodimer, homotetramer, homooctamer; can also form higher homooligomers.</text>
</comment>
<comment type="subcellular location">
    <subcellularLocation>
        <location evidence="1">Cytoplasm</location>
    </subcellularLocation>
</comment>
<comment type="similarity">
    <text evidence="5">Belongs to the carbon-nitrogen hydrolase superfamily. BUP family.</text>
</comment>
<protein>
    <recommendedName>
        <fullName>Beta-ureidopropionase</fullName>
        <ecNumber>3.5.1.6</ecNumber>
    </recommendedName>
    <alternativeName>
        <fullName>Beta-alanine synthase</fullName>
    </alternativeName>
    <alternativeName>
        <fullName>N-carbamoyl-beta-alanine amidohydrolase</fullName>
    </alternativeName>
</protein>
<gene>
    <name type="primary">UPB1</name>
</gene>
<sequence>MAGAEWKSLEECLEKHLPLPDLQEVKRVLYGKELRKLDLPREAFEAASREDFELQGYAFEAAEEQLRRPRIVHVGLVQNRIPLPANAPVAEQVSALHRRIKAIVEVAAMCGVNIICFQEAWTMPFAFCTREKLPWTEFAESAEDGPTTRFCQKLAKNHDMVVVSPILERDSEHGDVLWNTAVVISNSGAVLGKTRKNHIPRVGDFNESTYYMEGNLGHPVFQTQFGRIAVNICYGRHHPLNWLMYSINGAEIIFNPSATIGALSESLWSIEARNAAIANHCFTCAINRVGTEHFPNEFTSGDGKKAHQDFGYFYGSSYVAAPDGSRTPGLSRSQDGLLVAKLDLNLCQQVNDVWNFKMTGRYEMYARELAEAVKSNYSPTIVKE</sequence>
<keyword id="KW-0963">Cytoplasm</keyword>
<keyword id="KW-0378">Hydrolase</keyword>
<keyword id="KW-0597">Phosphoprotein</keyword>
<keyword id="KW-1185">Reference proteome</keyword>
<feature type="chain" id="PRO_0000204053" description="Beta-ureidopropionase">
    <location>
        <begin position="1"/>
        <end position="384"/>
    </location>
</feature>
<feature type="domain" description="CN hydrolase" evidence="4">
    <location>
        <begin position="72"/>
        <end position="344"/>
    </location>
</feature>
<feature type="active site" description="Proton acceptor" evidence="4">
    <location>
        <position position="119"/>
    </location>
</feature>
<feature type="active site" description="Proton donor" evidence="4">
    <location>
        <position position="196"/>
    </location>
</feature>
<feature type="active site" description="Nucleophile" evidence="4">
    <location>
        <position position="233"/>
    </location>
</feature>
<feature type="modified residue" description="Phosphoserine" evidence="2">
    <location>
        <position position="378"/>
    </location>
</feature>
<organism>
    <name type="scientific">Pongo abelii</name>
    <name type="common">Sumatran orangutan</name>
    <name type="synonym">Pongo pygmaeus abelii</name>
    <dbReference type="NCBI Taxonomy" id="9601"/>
    <lineage>
        <taxon>Eukaryota</taxon>
        <taxon>Metazoa</taxon>
        <taxon>Chordata</taxon>
        <taxon>Craniata</taxon>
        <taxon>Vertebrata</taxon>
        <taxon>Euteleostomi</taxon>
        <taxon>Mammalia</taxon>
        <taxon>Eutheria</taxon>
        <taxon>Euarchontoglires</taxon>
        <taxon>Primates</taxon>
        <taxon>Haplorrhini</taxon>
        <taxon>Catarrhini</taxon>
        <taxon>Hominidae</taxon>
        <taxon>Pongo</taxon>
    </lineage>
</organism>
<dbReference type="EC" id="3.5.1.6"/>
<dbReference type="EMBL" id="CR858612">
    <property type="protein sequence ID" value="CAH90834.1"/>
    <property type="molecule type" value="mRNA"/>
</dbReference>
<dbReference type="RefSeq" id="NP_001125476.1">
    <property type="nucleotide sequence ID" value="NM_001132004.1"/>
</dbReference>
<dbReference type="SMR" id="Q5RBM6"/>
<dbReference type="FunCoup" id="Q5RBM6">
    <property type="interactions" value="288"/>
</dbReference>
<dbReference type="STRING" id="9601.ENSPPYP00000012992"/>
<dbReference type="GeneID" id="100172385"/>
<dbReference type="KEGG" id="pon:100172385"/>
<dbReference type="CTD" id="51733"/>
<dbReference type="eggNOG" id="KOG0808">
    <property type="taxonomic scope" value="Eukaryota"/>
</dbReference>
<dbReference type="InParanoid" id="Q5RBM6"/>
<dbReference type="OrthoDB" id="412018at2759"/>
<dbReference type="UniPathway" id="UPA00131"/>
<dbReference type="Proteomes" id="UP000001595">
    <property type="component" value="Unplaced"/>
</dbReference>
<dbReference type="GO" id="GO:0005737">
    <property type="term" value="C:cytoplasm"/>
    <property type="evidence" value="ECO:0007669"/>
    <property type="project" value="UniProtKB-SubCell"/>
</dbReference>
<dbReference type="GO" id="GO:0003837">
    <property type="term" value="F:beta-ureidopropionase activity"/>
    <property type="evidence" value="ECO:0000250"/>
    <property type="project" value="UniProtKB"/>
</dbReference>
<dbReference type="GO" id="GO:0033396">
    <property type="term" value="P:beta-alanine biosynthetic process via 3-ureidopropionate"/>
    <property type="evidence" value="ECO:0000250"/>
    <property type="project" value="UniProtKB"/>
</dbReference>
<dbReference type="GO" id="GO:0051260">
    <property type="term" value="P:protein homooligomerization"/>
    <property type="evidence" value="ECO:0000250"/>
    <property type="project" value="UniProtKB"/>
</dbReference>
<dbReference type="GO" id="GO:0046135">
    <property type="term" value="P:pyrimidine nucleoside catabolic process"/>
    <property type="evidence" value="ECO:0000250"/>
    <property type="project" value="UniProtKB"/>
</dbReference>
<dbReference type="CDD" id="cd07587">
    <property type="entry name" value="ML_beta-AS"/>
    <property type="match status" value="1"/>
</dbReference>
<dbReference type="FunFam" id="3.60.110.10:FF:000009">
    <property type="entry name" value="Beta-ureidopropionase 1"/>
    <property type="match status" value="1"/>
</dbReference>
<dbReference type="Gene3D" id="3.60.110.10">
    <property type="entry name" value="Carbon-nitrogen hydrolase"/>
    <property type="match status" value="1"/>
</dbReference>
<dbReference type="InterPro" id="IPR050345">
    <property type="entry name" value="Aliph_Amidase/BUP"/>
</dbReference>
<dbReference type="InterPro" id="IPR003010">
    <property type="entry name" value="C-N_Hydrolase"/>
</dbReference>
<dbReference type="InterPro" id="IPR036526">
    <property type="entry name" value="C-N_Hydrolase_sf"/>
</dbReference>
<dbReference type="PANTHER" id="PTHR43674:SF2">
    <property type="entry name" value="BETA-UREIDOPROPIONASE"/>
    <property type="match status" value="1"/>
</dbReference>
<dbReference type="PANTHER" id="PTHR43674">
    <property type="entry name" value="NITRILASE C965.09-RELATED"/>
    <property type="match status" value="1"/>
</dbReference>
<dbReference type="Pfam" id="PF00795">
    <property type="entry name" value="CN_hydrolase"/>
    <property type="match status" value="1"/>
</dbReference>
<dbReference type="SUPFAM" id="SSF56317">
    <property type="entry name" value="Carbon-nitrogen hydrolase"/>
    <property type="match status" value="1"/>
</dbReference>
<dbReference type="PROSITE" id="PS50263">
    <property type="entry name" value="CN_HYDROLASE"/>
    <property type="match status" value="1"/>
</dbReference>
<proteinExistence type="evidence at transcript level"/>
<evidence type="ECO:0000250" key="1"/>
<evidence type="ECO:0000250" key="2">
    <source>
        <dbReference type="UniProtKB" id="Q03248"/>
    </source>
</evidence>
<evidence type="ECO:0000250" key="3">
    <source>
        <dbReference type="UniProtKB" id="Q9UBR1"/>
    </source>
</evidence>
<evidence type="ECO:0000255" key="4">
    <source>
        <dbReference type="PROSITE-ProRule" id="PRU00054"/>
    </source>
</evidence>
<evidence type="ECO:0000305" key="5"/>
<accession>Q5RBM6</accession>
<reference key="1">
    <citation type="submission" date="2004-11" db="EMBL/GenBank/DDBJ databases">
        <authorList>
            <consortium name="The German cDNA consortium"/>
        </authorList>
    </citation>
    <scope>NUCLEOTIDE SEQUENCE [LARGE SCALE MRNA]</scope>
    <source>
        <tissue>Kidney</tissue>
    </source>
</reference>
<name>BUP1_PONAB</name>